<comment type="function">
    <text evidence="1">Pyrophosphatase that catalyzes the hydrolysis of nucleoside triphosphates to their monophosphate derivatives, with a high preference for the non-canonical purine nucleotides XTP (xanthosine triphosphate), dITP (deoxyinosine triphosphate) and ITP. Seems to function as a house-cleaning enzyme that removes non-canonical purine nucleotides from the nucleotide pool, thus preventing their incorporation into DNA/RNA and avoiding chromosomal lesions.</text>
</comment>
<comment type="catalytic activity">
    <reaction evidence="1">
        <text>XTP + H2O = XMP + diphosphate + H(+)</text>
        <dbReference type="Rhea" id="RHEA:28610"/>
        <dbReference type="ChEBI" id="CHEBI:15377"/>
        <dbReference type="ChEBI" id="CHEBI:15378"/>
        <dbReference type="ChEBI" id="CHEBI:33019"/>
        <dbReference type="ChEBI" id="CHEBI:57464"/>
        <dbReference type="ChEBI" id="CHEBI:61314"/>
        <dbReference type="EC" id="3.6.1.66"/>
    </reaction>
</comment>
<comment type="catalytic activity">
    <reaction evidence="1">
        <text>dITP + H2O = dIMP + diphosphate + H(+)</text>
        <dbReference type="Rhea" id="RHEA:28342"/>
        <dbReference type="ChEBI" id="CHEBI:15377"/>
        <dbReference type="ChEBI" id="CHEBI:15378"/>
        <dbReference type="ChEBI" id="CHEBI:33019"/>
        <dbReference type="ChEBI" id="CHEBI:61194"/>
        <dbReference type="ChEBI" id="CHEBI:61382"/>
        <dbReference type="EC" id="3.6.1.66"/>
    </reaction>
</comment>
<comment type="catalytic activity">
    <reaction evidence="1">
        <text>ITP + H2O = IMP + diphosphate + H(+)</text>
        <dbReference type="Rhea" id="RHEA:29399"/>
        <dbReference type="ChEBI" id="CHEBI:15377"/>
        <dbReference type="ChEBI" id="CHEBI:15378"/>
        <dbReference type="ChEBI" id="CHEBI:33019"/>
        <dbReference type="ChEBI" id="CHEBI:58053"/>
        <dbReference type="ChEBI" id="CHEBI:61402"/>
        <dbReference type="EC" id="3.6.1.66"/>
    </reaction>
</comment>
<comment type="cofactor">
    <cofactor evidence="1">
        <name>Mg(2+)</name>
        <dbReference type="ChEBI" id="CHEBI:18420"/>
    </cofactor>
    <text evidence="1">Binds 1 Mg(2+) ion per subunit.</text>
</comment>
<comment type="subunit">
    <text evidence="1">Homodimer.</text>
</comment>
<comment type="similarity">
    <text evidence="1">Belongs to the HAM1 NTPase family.</text>
</comment>
<sequence length="213" mass="23369">MKIVLATSNLDKVKEIKEFLKGYEIYALSEVVKPFEIVEDGSTFQANALIKSRAVFAKLKELGLEDEFVSLSDDSGISVDALGGEPGIYSARYFDLDENGKVCGKNANDANNRAKLISKLKALNLKSSPAHYTACIAISSKFGDYTAHGFMYGEAIDEERGTNGFGYDALFIPNGFNKTLGELDNETKLKISHRSKGLELANFVLKSLKKNFS</sequence>
<protein>
    <recommendedName>
        <fullName evidence="1">dITP/XTP pyrophosphatase</fullName>
        <ecNumber evidence="1">3.6.1.66</ecNumber>
    </recommendedName>
    <alternativeName>
        <fullName evidence="1">Non-canonical purine NTP pyrophosphatase</fullName>
    </alternativeName>
    <alternativeName>
        <fullName evidence="1">Non-standard purine NTP pyrophosphatase</fullName>
    </alternativeName>
    <alternativeName>
        <fullName evidence="1">Nucleoside-triphosphate diphosphatase</fullName>
    </alternativeName>
    <alternativeName>
        <fullName evidence="1">Nucleoside-triphosphate pyrophosphatase</fullName>
        <shortName evidence="1">NTPase</shortName>
    </alternativeName>
</protein>
<proteinExistence type="inferred from homology"/>
<accession>A7ZBP3</accession>
<name>IXTPA_CAMC1</name>
<feature type="chain" id="PRO_1000073506" description="dITP/XTP pyrophosphatase">
    <location>
        <begin position="1"/>
        <end position="213"/>
    </location>
</feature>
<feature type="active site" description="Proton acceptor" evidence="1">
    <location>
        <position position="74"/>
    </location>
</feature>
<feature type="binding site" evidence="1">
    <location>
        <begin position="7"/>
        <end position="12"/>
    </location>
    <ligand>
        <name>substrate</name>
    </ligand>
</feature>
<feature type="binding site" evidence="1">
    <location>
        <position position="74"/>
    </location>
    <ligand>
        <name>Mg(2+)</name>
        <dbReference type="ChEBI" id="CHEBI:18420"/>
    </ligand>
</feature>
<feature type="binding site" evidence="1">
    <location>
        <position position="75"/>
    </location>
    <ligand>
        <name>substrate</name>
    </ligand>
</feature>
<feature type="binding site" evidence="1">
    <location>
        <begin position="165"/>
        <end position="168"/>
    </location>
    <ligand>
        <name>substrate</name>
    </ligand>
</feature>
<feature type="binding site" evidence="1">
    <location>
        <position position="188"/>
    </location>
    <ligand>
        <name>substrate</name>
    </ligand>
</feature>
<feature type="binding site" evidence="1">
    <location>
        <begin position="193"/>
        <end position="194"/>
    </location>
    <ligand>
        <name>substrate</name>
    </ligand>
</feature>
<evidence type="ECO:0000255" key="1">
    <source>
        <dbReference type="HAMAP-Rule" id="MF_01405"/>
    </source>
</evidence>
<organism>
    <name type="scientific">Campylobacter concisus (strain 13826)</name>
    <dbReference type="NCBI Taxonomy" id="360104"/>
    <lineage>
        <taxon>Bacteria</taxon>
        <taxon>Pseudomonadati</taxon>
        <taxon>Campylobacterota</taxon>
        <taxon>Epsilonproteobacteria</taxon>
        <taxon>Campylobacterales</taxon>
        <taxon>Campylobacteraceae</taxon>
        <taxon>Campylobacter</taxon>
    </lineage>
</organism>
<reference key="1">
    <citation type="submission" date="2007-10" db="EMBL/GenBank/DDBJ databases">
        <title>Genome sequence of Campylobacter concisus 13826 isolated from human feces.</title>
        <authorList>
            <person name="Fouts D.E."/>
            <person name="Mongodin E.F."/>
            <person name="Puiu D."/>
            <person name="Sebastian Y."/>
            <person name="Miller W.G."/>
            <person name="Mandrell R.E."/>
            <person name="On S."/>
            <person name="Nelson K.E."/>
        </authorList>
    </citation>
    <scope>NUCLEOTIDE SEQUENCE [LARGE SCALE GENOMIC DNA]</scope>
    <source>
        <strain>13826</strain>
    </source>
</reference>
<keyword id="KW-0378">Hydrolase</keyword>
<keyword id="KW-0460">Magnesium</keyword>
<keyword id="KW-0479">Metal-binding</keyword>
<keyword id="KW-0546">Nucleotide metabolism</keyword>
<keyword id="KW-0547">Nucleotide-binding</keyword>
<dbReference type="EC" id="3.6.1.66" evidence="1"/>
<dbReference type="EMBL" id="CP000792">
    <property type="protein sequence ID" value="EAT98805.1"/>
    <property type="molecule type" value="Genomic_DNA"/>
</dbReference>
<dbReference type="RefSeq" id="WP_012001208.1">
    <property type="nucleotide sequence ID" value="NC_009802.2"/>
</dbReference>
<dbReference type="SMR" id="A7ZBP3"/>
<dbReference type="STRING" id="360104.CCC13826_0746"/>
<dbReference type="KEGG" id="cco:CCC13826_0746"/>
<dbReference type="eggNOG" id="COG0127">
    <property type="taxonomic scope" value="Bacteria"/>
</dbReference>
<dbReference type="HOGENOM" id="CLU_082080_0_2_7"/>
<dbReference type="OrthoDB" id="9807456at2"/>
<dbReference type="Proteomes" id="UP000001121">
    <property type="component" value="Chromosome"/>
</dbReference>
<dbReference type="GO" id="GO:0005829">
    <property type="term" value="C:cytosol"/>
    <property type="evidence" value="ECO:0007669"/>
    <property type="project" value="TreeGrafter"/>
</dbReference>
<dbReference type="GO" id="GO:0035870">
    <property type="term" value="F:dITP diphosphatase activity"/>
    <property type="evidence" value="ECO:0007669"/>
    <property type="project" value="RHEA"/>
</dbReference>
<dbReference type="GO" id="GO:0036220">
    <property type="term" value="F:ITP diphosphatase activity"/>
    <property type="evidence" value="ECO:0007669"/>
    <property type="project" value="UniProtKB-EC"/>
</dbReference>
<dbReference type="GO" id="GO:0046872">
    <property type="term" value="F:metal ion binding"/>
    <property type="evidence" value="ECO:0007669"/>
    <property type="project" value="UniProtKB-KW"/>
</dbReference>
<dbReference type="GO" id="GO:0000166">
    <property type="term" value="F:nucleotide binding"/>
    <property type="evidence" value="ECO:0007669"/>
    <property type="project" value="UniProtKB-KW"/>
</dbReference>
<dbReference type="GO" id="GO:0017111">
    <property type="term" value="F:ribonucleoside triphosphate phosphatase activity"/>
    <property type="evidence" value="ECO:0007669"/>
    <property type="project" value="InterPro"/>
</dbReference>
<dbReference type="GO" id="GO:0036222">
    <property type="term" value="F:XTP diphosphatase activity"/>
    <property type="evidence" value="ECO:0007669"/>
    <property type="project" value="RHEA"/>
</dbReference>
<dbReference type="GO" id="GO:0009117">
    <property type="term" value="P:nucleotide metabolic process"/>
    <property type="evidence" value="ECO:0007669"/>
    <property type="project" value="UniProtKB-KW"/>
</dbReference>
<dbReference type="GO" id="GO:0009146">
    <property type="term" value="P:purine nucleoside triphosphate catabolic process"/>
    <property type="evidence" value="ECO:0007669"/>
    <property type="project" value="UniProtKB-UniRule"/>
</dbReference>
<dbReference type="CDD" id="cd00515">
    <property type="entry name" value="HAM1"/>
    <property type="match status" value="1"/>
</dbReference>
<dbReference type="Gene3D" id="3.90.950.10">
    <property type="match status" value="1"/>
</dbReference>
<dbReference type="HAMAP" id="MF_01405">
    <property type="entry name" value="Non_canon_purine_NTPase"/>
    <property type="match status" value="1"/>
</dbReference>
<dbReference type="InterPro" id="IPR020922">
    <property type="entry name" value="dITP/XTP_pyrophosphatase"/>
</dbReference>
<dbReference type="InterPro" id="IPR029001">
    <property type="entry name" value="ITPase-like_fam"/>
</dbReference>
<dbReference type="InterPro" id="IPR002637">
    <property type="entry name" value="RdgB/HAM1"/>
</dbReference>
<dbReference type="PANTHER" id="PTHR11067:SF9">
    <property type="entry name" value="INOSINE TRIPHOSPHATE PYROPHOSPHATASE"/>
    <property type="match status" value="1"/>
</dbReference>
<dbReference type="PANTHER" id="PTHR11067">
    <property type="entry name" value="INOSINE TRIPHOSPHATE PYROPHOSPHATASE/HAM1 PROTEIN"/>
    <property type="match status" value="1"/>
</dbReference>
<dbReference type="Pfam" id="PF01725">
    <property type="entry name" value="Ham1p_like"/>
    <property type="match status" value="1"/>
</dbReference>
<dbReference type="SUPFAM" id="SSF52972">
    <property type="entry name" value="ITPase-like"/>
    <property type="match status" value="1"/>
</dbReference>
<gene>
    <name type="ordered locus">Ccon26_02910</name>
    <name type="ORF">CCC13826_0746</name>
</gene>